<protein>
    <recommendedName>
        <fullName evidence="1">RNA 3'-terminal phosphate cyclase</fullName>
        <shortName evidence="1">RNA cyclase</shortName>
        <shortName evidence="1">RNA-3'-phosphate cyclase</shortName>
        <ecNumber evidence="1">6.5.1.4</ecNumber>
    </recommendedName>
</protein>
<sequence>MRKDLIELDGSEGGGQILRSALSLSMTSGQPLRIRNIRGRRSRPGLLRQHLTAVRAAAEICAAEVEGAELGSRELAFRPGAIRAGDYAFAIGSAGSCSLVLQTLLPALLAANGESRVRISGGTHNPLAPPADFLRDSWLPLLQRMGAEVDLELLRHGFVPAGGGELLARVRPARWRPLQLEHPGAALRRQARALLAGIPGHVGERELERVRQRLGWSDEERQLEFLAEVQGPGNALLLRIDCEHICATFCAFGQAGVSAERVAEQVATQAIGWMESGCAADEHLADQLLLPMALAGAGSFTTPRLSAHLQSNRRVIERFLPVRIGDQALDGGGHRIVITSA</sequence>
<name>RTCA_PSEA8</name>
<proteinExistence type="inferred from homology"/>
<comment type="function">
    <text evidence="1">Catalyzes the conversion of 3'-phosphate to a 2',3'-cyclic phosphodiester at the end of RNA. The mechanism of action of the enzyme occurs in 3 steps: (A) adenylation of the enzyme by ATP; (B) transfer of adenylate to an RNA-N3'P to produce RNA-N3'PP5'A; (C) and attack of the adjacent 2'-hydroxyl on the 3'-phosphorus in the diester linkage to produce the cyclic end product. The biological role of this enzyme is unknown but it is likely to function in some aspects of cellular RNA processing.</text>
</comment>
<comment type="catalytic activity">
    <reaction evidence="1">
        <text>a 3'-end 3'-phospho-ribonucleotide-RNA + ATP = a 3'-end 2',3'-cyclophospho-ribonucleotide-RNA + AMP + diphosphate</text>
        <dbReference type="Rhea" id="RHEA:23976"/>
        <dbReference type="Rhea" id="RHEA-COMP:10463"/>
        <dbReference type="Rhea" id="RHEA-COMP:10464"/>
        <dbReference type="ChEBI" id="CHEBI:30616"/>
        <dbReference type="ChEBI" id="CHEBI:33019"/>
        <dbReference type="ChEBI" id="CHEBI:83062"/>
        <dbReference type="ChEBI" id="CHEBI:83064"/>
        <dbReference type="ChEBI" id="CHEBI:456215"/>
        <dbReference type="EC" id="6.5.1.4"/>
    </reaction>
</comment>
<comment type="subcellular location">
    <subcellularLocation>
        <location evidence="1">Cytoplasm</location>
    </subcellularLocation>
</comment>
<comment type="similarity">
    <text evidence="1">Belongs to the RNA 3'-terminal cyclase family. Type 1 subfamily.</text>
</comment>
<accession>B7V0C8</accession>
<keyword id="KW-0067">ATP-binding</keyword>
<keyword id="KW-0963">Cytoplasm</keyword>
<keyword id="KW-0436">Ligase</keyword>
<keyword id="KW-0547">Nucleotide-binding</keyword>
<feature type="chain" id="PRO_1000118706" description="RNA 3'-terminal phosphate cyclase">
    <location>
        <begin position="1"/>
        <end position="341"/>
    </location>
</feature>
<feature type="active site" description="Tele-AMP-histidine intermediate" evidence="1">
    <location>
        <position position="308"/>
    </location>
</feature>
<feature type="binding site" evidence="1">
    <location>
        <position position="102"/>
    </location>
    <ligand>
        <name>ATP</name>
        <dbReference type="ChEBI" id="CHEBI:30616"/>
    </ligand>
</feature>
<feature type="binding site" evidence="1">
    <location>
        <begin position="283"/>
        <end position="287"/>
    </location>
    <ligand>
        <name>ATP</name>
        <dbReference type="ChEBI" id="CHEBI:30616"/>
    </ligand>
</feature>
<organism>
    <name type="scientific">Pseudomonas aeruginosa (strain LESB58)</name>
    <dbReference type="NCBI Taxonomy" id="557722"/>
    <lineage>
        <taxon>Bacteria</taxon>
        <taxon>Pseudomonadati</taxon>
        <taxon>Pseudomonadota</taxon>
        <taxon>Gammaproteobacteria</taxon>
        <taxon>Pseudomonadales</taxon>
        <taxon>Pseudomonadaceae</taxon>
        <taxon>Pseudomonas</taxon>
    </lineage>
</organism>
<dbReference type="EC" id="6.5.1.4" evidence="1"/>
<dbReference type="EMBL" id="FM209186">
    <property type="protein sequence ID" value="CAW29722.1"/>
    <property type="molecule type" value="Genomic_DNA"/>
</dbReference>
<dbReference type="RefSeq" id="WP_012614552.1">
    <property type="nucleotide sequence ID" value="NC_011770.1"/>
</dbReference>
<dbReference type="SMR" id="B7V0C8"/>
<dbReference type="KEGG" id="pag:PLES_49681"/>
<dbReference type="HOGENOM" id="CLU_027882_0_0_6"/>
<dbReference type="GO" id="GO:0005737">
    <property type="term" value="C:cytoplasm"/>
    <property type="evidence" value="ECO:0007669"/>
    <property type="project" value="UniProtKB-SubCell"/>
</dbReference>
<dbReference type="GO" id="GO:0005524">
    <property type="term" value="F:ATP binding"/>
    <property type="evidence" value="ECO:0007669"/>
    <property type="project" value="UniProtKB-KW"/>
</dbReference>
<dbReference type="GO" id="GO:0003963">
    <property type="term" value="F:RNA-3'-phosphate cyclase activity"/>
    <property type="evidence" value="ECO:0007669"/>
    <property type="project" value="UniProtKB-UniRule"/>
</dbReference>
<dbReference type="GO" id="GO:0006396">
    <property type="term" value="P:RNA processing"/>
    <property type="evidence" value="ECO:0007669"/>
    <property type="project" value="InterPro"/>
</dbReference>
<dbReference type="CDD" id="cd00874">
    <property type="entry name" value="RNA_Cyclase_Class_II"/>
    <property type="match status" value="1"/>
</dbReference>
<dbReference type="FunFam" id="3.30.360.20:FF:000003">
    <property type="entry name" value="RNA 3'-terminal phosphate cyclase"/>
    <property type="match status" value="1"/>
</dbReference>
<dbReference type="Gene3D" id="3.65.10.20">
    <property type="entry name" value="RNA 3'-terminal phosphate cyclase domain"/>
    <property type="match status" value="1"/>
</dbReference>
<dbReference type="Gene3D" id="3.30.360.20">
    <property type="entry name" value="RNA 3'-terminal phosphate cyclase, insert domain"/>
    <property type="match status" value="1"/>
</dbReference>
<dbReference type="HAMAP" id="MF_00200">
    <property type="entry name" value="RTC"/>
    <property type="match status" value="1"/>
</dbReference>
<dbReference type="InterPro" id="IPR013791">
    <property type="entry name" value="RNA3'-term_phos_cycl_insert"/>
</dbReference>
<dbReference type="InterPro" id="IPR023797">
    <property type="entry name" value="RNA3'_phos_cyclase_dom"/>
</dbReference>
<dbReference type="InterPro" id="IPR037136">
    <property type="entry name" value="RNA3'_phos_cyclase_dom_sf"/>
</dbReference>
<dbReference type="InterPro" id="IPR000228">
    <property type="entry name" value="RNA3'_term_phos_cyc"/>
</dbReference>
<dbReference type="InterPro" id="IPR017770">
    <property type="entry name" value="RNA3'_term_phos_cyc_type_1"/>
</dbReference>
<dbReference type="InterPro" id="IPR020719">
    <property type="entry name" value="RNA3'_term_phos_cycl-like_CS"/>
</dbReference>
<dbReference type="InterPro" id="IPR013792">
    <property type="entry name" value="RNA3'P_cycl/enolpyr_Trfase_a/b"/>
</dbReference>
<dbReference type="InterPro" id="IPR036553">
    <property type="entry name" value="RPTC_insert"/>
</dbReference>
<dbReference type="NCBIfam" id="NF003246">
    <property type="entry name" value="PRK04204.1-2"/>
    <property type="match status" value="1"/>
</dbReference>
<dbReference type="NCBIfam" id="NF003247">
    <property type="entry name" value="PRK04204.1-3"/>
    <property type="match status" value="1"/>
</dbReference>
<dbReference type="NCBIfam" id="TIGR03399">
    <property type="entry name" value="RNA_3prim_cycl"/>
    <property type="match status" value="1"/>
</dbReference>
<dbReference type="PANTHER" id="PTHR11096">
    <property type="entry name" value="RNA 3' TERMINAL PHOSPHATE CYCLASE"/>
    <property type="match status" value="1"/>
</dbReference>
<dbReference type="PANTHER" id="PTHR11096:SF0">
    <property type="entry name" value="RNA 3'-TERMINAL PHOSPHATE CYCLASE"/>
    <property type="match status" value="1"/>
</dbReference>
<dbReference type="Pfam" id="PF01137">
    <property type="entry name" value="RTC"/>
    <property type="match status" value="1"/>
</dbReference>
<dbReference type="Pfam" id="PF05189">
    <property type="entry name" value="RTC_insert"/>
    <property type="match status" value="1"/>
</dbReference>
<dbReference type="PIRSF" id="PIRSF005378">
    <property type="entry name" value="RNA3'_term_phos_cycl_euk"/>
    <property type="match status" value="1"/>
</dbReference>
<dbReference type="SUPFAM" id="SSF55205">
    <property type="entry name" value="EPT/RTPC-like"/>
    <property type="match status" value="2"/>
</dbReference>
<dbReference type="SUPFAM" id="SSF52913">
    <property type="entry name" value="RNA 3'-terminal phosphate cyclase, RPTC, insert domain"/>
    <property type="match status" value="1"/>
</dbReference>
<dbReference type="PROSITE" id="PS01287">
    <property type="entry name" value="RTC"/>
    <property type="match status" value="1"/>
</dbReference>
<gene>
    <name evidence="1" type="primary">rtcA</name>
    <name type="ordered locus">PLES_49681</name>
</gene>
<reference key="1">
    <citation type="journal article" date="2009" name="Genome Res.">
        <title>Newly introduced genomic prophage islands are critical determinants of in vivo competitiveness in the Liverpool epidemic strain of Pseudomonas aeruginosa.</title>
        <authorList>
            <person name="Winstanley C."/>
            <person name="Langille M.G.I."/>
            <person name="Fothergill J.L."/>
            <person name="Kukavica-Ibrulj I."/>
            <person name="Paradis-Bleau C."/>
            <person name="Sanschagrin F."/>
            <person name="Thomson N.R."/>
            <person name="Winsor G.L."/>
            <person name="Quail M.A."/>
            <person name="Lennard N."/>
            <person name="Bignell A."/>
            <person name="Clarke L."/>
            <person name="Seeger K."/>
            <person name="Saunders D."/>
            <person name="Harris D."/>
            <person name="Parkhill J."/>
            <person name="Hancock R.E.W."/>
            <person name="Brinkman F.S.L."/>
            <person name="Levesque R.C."/>
        </authorList>
    </citation>
    <scope>NUCLEOTIDE SEQUENCE [LARGE SCALE GENOMIC DNA]</scope>
    <source>
        <strain>LESB58</strain>
    </source>
</reference>
<evidence type="ECO:0000255" key="1">
    <source>
        <dbReference type="HAMAP-Rule" id="MF_00200"/>
    </source>
</evidence>